<protein>
    <recommendedName>
        <fullName evidence="2">DNA polymerase sliding clamp</fullName>
    </recommendedName>
    <alternativeName>
        <fullName evidence="2">Proliferating cell nuclear antigen homolog</fullName>
        <shortName evidence="2">PCNA</shortName>
    </alternativeName>
</protein>
<feature type="chain" id="PRO_0000149203" description="DNA polymerase sliding clamp">
    <location>
        <begin position="1"/>
        <end position="249"/>
    </location>
</feature>
<feature type="strand" evidence="5">
    <location>
        <begin position="3"/>
        <end position="8"/>
    </location>
</feature>
<feature type="helix" evidence="5">
    <location>
        <begin position="10"/>
        <end position="20"/>
    </location>
</feature>
<feature type="strand" evidence="5">
    <location>
        <begin position="21"/>
        <end position="23"/>
    </location>
</feature>
<feature type="strand" evidence="5">
    <location>
        <begin position="28"/>
        <end position="31"/>
    </location>
</feature>
<feature type="strand" evidence="5">
    <location>
        <begin position="33"/>
        <end position="41"/>
    </location>
</feature>
<feature type="strand" evidence="5">
    <location>
        <begin position="47"/>
        <end position="54"/>
    </location>
</feature>
<feature type="helix" evidence="5">
    <location>
        <begin position="55"/>
        <end position="57"/>
    </location>
</feature>
<feature type="strand" evidence="5">
    <location>
        <begin position="58"/>
        <end position="63"/>
    </location>
</feature>
<feature type="strand" evidence="5">
    <location>
        <begin position="67"/>
        <end position="69"/>
    </location>
</feature>
<feature type="helix" evidence="5">
    <location>
        <begin position="73"/>
        <end position="80"/>
    </location>
</feature>
<feature type="strand" evidence="5">
    <location>
        <begin position="88"/>
        <end position="93"/>
    </location>
</feature>
<feature type="strand" evidence="5">
    <location>
        <begin position="95"/>
        <end position="114"/>
    </location>
</feature>
<feature type="strand" evidence="5">
    <location>
        <begin position="132"/>
        <end position="137"/>
    </location>
</feature>
<feature type="helix" evidence="5">
    <location>
        <begin position="138"/>
        <end position="149"/>
    </location>
</feature>
<feature type="strand" evidence="5">
    <location>
        <begin position="153"/>
        <end position="160"/>
    </location>
</feature>
<feature type="strand" evidence="5">
    <location>
        <begin position="163"/>
        <end position="169"/>
    </location>
</feature>
<feature type="strand" evidence="5">
    <location>
        <begin position="174"/>
        <end position="180"/>
    </location>
</feature>
<feature type="strand" evidence="5">
    <location>
        <begin position="186"/>
        <end position="193"/>
    </location>
</feature>
<feature type="strand" evidence="5">
    <location>
        <begin position="195"/>
        <end position="200"/>
    </location>
</feature>
<feature type="helix" evidence="5">
    <location>
        <begin position="201"/>
        <end position="208"/>
    </location>
</feature>
<feature type="strand" evidence="5">
    <location>
        <begin position="216"/>
        <end position="221"/>
    </location>
</feature>
<feature type="strand" evidence="6">
    <location>
        <begin position="223"/>
        <end position="225"/>
    </location>
</feature>
<feature type="strand" evidence="5">
    <location>
        <begin position="227"/>
        <end position="233"/>
    </location>
</feature>
<feature type="turn" evidence="5">
    <location>
        <begin position="234"/>
        <end position="236"/>
    </location>
</feature>
<feature type="strand" evidence="5">
    <location>
        <begin position="237"/>
        <end position="243"/>
    </location>
</feature>
<organism>
    <name type="scientific">Pyrococcus abyssi (strain GE5 / Orsay)</name>
    <dbReference type="NCBI Taxonomy" id="272844"/>
    <lineage>
        <taxon>Archaea</taxon>
        <taxon>Methanobacteriati</taxon>
        <taxon>Methanobacteriota</taxon>
        <taxon>Thermococci</taxon>
        <taxon>Thermococcales</taxon>
        <taxon>Thermococcaceae</taxon>
        <taxon>Pyrococcus</taxon>
    </lineage>
</organism>
<name>PCNA_PYRAB</name>
<dbReference type="EMBL" id="AJ248287">
    <property type="protein sequence ID" value="CAB50284.1"/>
    <property type="molecule type" value="Genomic_DNA"/>
</dbReference>
<dbReference type="EMBL" id="HE613800">
    <property type="protein sequence ID" value="CCE70822.1"/>
    <property type="molecule type" value="Genomic_DNA"/>
</dbReference>
<dbReference type="PIR" id="G75048">
    <property type="entry name" value="G75048"/>
</dbReference>
<dbReference type="RefSeq" id="WP_010868494.1">
    <property type="nucleotide sequence ID" value="NC_000868.1"/>
</dbReference>
<dbReference type="PDB" id="6T7X">
    <property type="method" value="X-ray"/>
    <property type="resolution" value="2.30 A"/>
    <property type="chains" value="A=1-249"/>
</dbReference>
<dbReference type="PDB" id="6T7Y">
    <property type="method" value="X-ray"/>
    <property type="resolution" value="2.70 A"/>
    <property type="chains" value="A=1-249"/>
</dbReference>
<dbReference type="PDB" id="6T8H">
    <property type="method" value="EM"/>
    <property type="resolution" value="3.77 A"/>
    <property type="chains" value="C/D/E=1-249"/>
</dbReference>
<dbReference type="PDB" id="8PPT">
    <property type="method" value="EM"/>
    <property type="resolution" value="2.90 A"/>
    <property type="chains" value="C/D/E=1-249"/>
</dbReference>
<dbReference type="PDB" id="8PPU">
    <property type="method" value="EM"/>
    <property type="resolution" value="3.02 A"/>
    <property type="chains" value="C/D/E=1-249"/>
</dbReference>
<dbReference type="PDB" id="8PPV">
    <property type="method" value="EM"/>
    <property type="resolution" value="3.02 A"/>
    <property type="chains" value="C/D/E=1-249"/>
</dbReference>
<dbReference type="PDBsum" id="6T7X"/>
<dbReference type="PDBsum" id="6T7Y"/>
<dbReference type="PDBsum" id="6T8H"/>
<dbReference type="PDBsum" id="8PPT"/>
<dbReference type="PDBsum" id="8PPU"/>
<dbReference type="PDBsum" id="8PPV"/>
<dbReference type="EMDB" id="EMD-10401"/>
<dbReference type="EMDB" id="EMD-17815"/>
<dbReference type="EMDB" id="EMD-17816"/>
<dbReference type="EMDB" id="EMD-17817"/>
<dbReference type="SMR" id="Q9UYX8"/>
<dbReference type="IntAct" id="Q9UYX8">
    <property type="interactions" value="1"/>
</dbReference>
<dbReference type="MINT" id="Q9UYX8"/>
<dbReference type="STRING" id="272844.PAB1465"/>
<dbReference type="KEGG" id="pab:PAB1465"/>
<dbReference type="PATRIC" id="fig|272844.11.peg.1465"/>
<dbReference type="eggNOG" id="arCOG00488">
    <property type="taxonomic scope" value="Archaea"/>
</dbReference>
<dbReference type="HOGENOM" id="CLU_043978_1_1_2"/>
<dbReference type="OrthoDB" id="14749at2157"/>
<dbReference type="PhylomeDB" id="Q9UYX8"/>
<dbReference type="Proteomes" id="UP000000810">
    <property type="component" value="Chromosome"/>
</dbReference>
<dbReference type="Proteomes" id="UP000009139">
    <property type="component" value="Chromosome"/>
</dbReference>
<dbReference type="GO" id="GO:0003677">
    <property type="term" value="F:DNA binding"/>
    <property type="evidence" value="ECO:0007669"/>
    <property type="project" value="UniProtKB-UniRule"/>
</dbReference>
<dbReference type="GO" id="GO:0030337">
    <property type="term" value="F:DNA polymerase processivity factor activity"/>
    <property type="evidence" value="ECO:0007669"/>
    <property type="project" value="UniProtKB-UniRule"/>
</dbReference>
<dbReference type="GO" id="GO:0006272">
    <property type="term" value="P:leading strand elongation"/>
    <property type="evidence" value="ECO:0007669"/>
    <property type="project" value="TreeGrafter"/>
</dbReference>
<dbReference type="GO" id="GO:0006275">
    <property type="term" value="P:regulation of DNA replication"/>
    <property type="evidence" value="ECO:0007669"/>
    <property type="project" value="UniProtKB-UniRule"/>
</dbReference>
<dbReference type="CDD" id="cd00577">
    <property type="entry name" value="PCNA"/>
    <property type="match status" value="1"/>
</dbReference>
<dbReference type="FunFam" id="3.70.10.10:FF:000038">
    <property type="entry name" value="DNA polymerase sliding clamp 1"/>
    <property type="match status" value="1"/>
</dbReference>
<dbReference type="Gene3D" id="3.70.10.10">
    <property type="match status" value="1"/>
</dbReference>
<dbReference type="HAMAP" id="MF_00317">
    <property type="entry name" value="DNApol_clamp_arch"/>
    <property type="match status" value="1"/>
</dbReference>
<dbReference type="InterPro" id="IPR046938">
    <property type="entry name" value="DNA_clamp_sf"/>
</dbReference>
<dbReference type="InterPro" id="IPR000730">
    <property type="entry name" value="Pr_cel_nuc_antig"/>
</dbReference>
<dbReference type="InterPro" id="IPR022649">
    <property type="entry name" value="Pr_cel_nuc_antig_C"/>
</dbReference>
<dbReference type="InterPro" id="IPR022659">
    <property type="entry name" value="Pr_cel_nuc_antig_CS"/>
</dbReference>
<dbReference type="InterPro" id="IPR022648">
    <property type="entry name" value="Pr_cel_nuc_antig_N"/>
</dbReference>
<dbReference type="NCBIfam" id="TIGR00590">
    <property type="entry name" value="pcna"/>
    <property type="match status" value="1"/>
</dbReference>
<dbReference type="NCBIfam" id="NF002219">
    <property type="entry name" value="PRK01115.1-2"/>
    <property type="match status" value="1"/>
</dbReference>
<dbReference type="NCBIfam" id="NF002221">
    <property type="entry name" value="PRK01115.1-4"/>
    <property type="match status" value="1"/>
</dbReference>
<dbReference type="PANTHER" id="PTHR11352">
    <property type="entry name" value="PROLIFERATING CELL NUCLEAR ANTIGEN"/>
    <property type="match status" value="1"/>
</dbReference>
<dbReference type="PANTHER" id="PTHR11352:SF0">
    <property type="entry name" value="PROLIFERATING CELL NUCLEAR ANTIGEN"/>
    <property type="match status" value="1"/>
</dbReference>
<dbReference type="Pfam" id="PF02747">
    <property type="entry name" value="PCNA_C"/>
    <property type="match status" value="1"/>
</dbReference>
<dbReference type="Pfam" id="PF00705">
    <property type="entry name" value="PCNA_N"/>
    <property type="match status" value="1"/>
</dbReference>
<dbReference type="PRINTS" id="PR00339">
    <property type="entry name" value="PCNACYCLIN"/>
</dbReference>
<dbReference type="SUPFAM" id="SSF55979">
    <property type="entry name" value="DNA clamp"/>
    <property type="match status" value="2"/>
</dbReference>
<dbReference type="PROSITE" id="PS01251">
    <property type="entry name" value="PCNA_1"/>
    <property type="match status" value="1"/>
</dbReference>
<accession>Q9UYX8</accession>
<accession>G8ZHI5</accession>
<gene>
    <name evidence="2" type="primary">pcn</name>
    <name type="ordered locus">PYRAB13790</name>
    <name type="ORF">PAB1465</name>
</gene>
<evidence type="ECO:0000250" key="1"/>
<evidence type="ECO:0000255" key="2">
    <source>
        <dbReference type="HAMAP-Rule" id="MF_00317"/>
    </source>
</evidence>
<evidence type="ECO:0000269" key="3">
    <source>
    </source>
</evidence>
<evidence type="ECO:0000269" key="4">
    <source>
    </source>
</evidence>
<evidence type="ECO:0007829" key="5">
    <source>
        <dbReference type="PDB" id="6T7X"/>
    </source>
</evidence>
<evidence type="ECO:0007829" key="6">
    <source>
        <dbReference type="PDB" id="8PPT"/>
    </source>
</evidence>
<proteinExistence type="evidence at protein level"/>
<comment type="function">
    <text evidence="2 4">Sliding clamp subunit that acts as a moving platform for DNA processing. Responsible for tethering the catalytic subunit of DNA polymerase and other proteins to DNA during high-speed replication (By similarity). Regulates activity of NucS endonuclease and prevents non-specific cleavage.</text>
</comment>
<comment type="subunit">
    <text evidence="1 3 4">The subunits circularize to form a toroid; DNA passes through its center. Replication factor C (RFC) is required to load the toroid on the DNA (By similarity). Homotrimer. Interacts with NucS.</text>
</comment>
<comment type="interaction">
    <interactant intactId="EBI-7103152">
        <id>Q9UYX8</id>
    </interactant>
    <interactant intactId="EBI-7103178">
        <id>Q9V2E8</id>
        <label>nucS</label>
    </interactant>
    <organismsDiffer>false</organismsDiffer>
    <experiments>3</experiments>
</comment>
<comment type="similarity">
    <text evidence="2">Belongs to the PCNA family.</text>
</comment>
<reference key="1">
    <citation type="journal article" date="2003" name="Mol. Microbiol.">
        <title>An integrated analysis of the genome of the hyperthermophilic archaeon Pyrococcus abyssi.</title>
        <authorList>
            <person name="Cohen G.N."/>
            <person name="Barbe V."/>
            <person name="Flament D."/>
            <person name="Galperin M."/>
            <person name="Heilig R."/>
            <person name="Lecompte O."/>
            <person name="Poch O."/>
            <person name="Prieur D."/>
            <person name="Querellou J."/>
            <person name="Ripp R."/>
            <person name="Thierry J.-C."/>
            <person name="Van der Oost J."/>
            <person name="Weissenbach J."/>
            <person name="Zivanovic Y."/>
            <person name="Forterre P."/>
        </authorList>
    </citation>
    <scope>NUCLEOTIDE SEQUENCE [LARGE SCALE GENOMIC DNA]</scope>
    <source>
        <strain>GE5 / Orsay</strain>
    </source>
</reference>
<reference key="2">
    <citation type="journal article" date="2012" name="Curr. Microbiol.">
        <title>Re-annotation of two hyperthermophilic archaea Pyrococcus abyssi GE5 and Pyrococcus furiosus DSM 3638.</title>
        <authorList>
            <person name="Gao J."/>
            <person name="Wang J."/>
        </authorList>
    </citation>
    <scope>GENOME REANNOTATION</scope>
    <source>
        <strain>GE5 / Orsay</strain>
    </source>
</reference>
<reference key="3">
    <citation type="journal article" date="2009" name="EMBO J.">
        <title>Structure and function of a novel endonuclease acting on branched DNA substrates.</title>
        <authorList>
            <person name="Ren B."/>
            <person name="Kuhn J."/>
            <person name="Meslet-Cladiere L."/>
            <person name="Briffotaux J."/>
            <person name="Norais C."/>
            <person name="Lavigne R."/>
            <person name="Flament D."/>
            <person name="Ladenstein R."/>
            <person name="Myllykallio H."/>
        </authorList>
    </citation>
    <scope>INTERACTION WITH NUCS</scope>
</reference>
<reference key="4">
    <citation type="journal article" date="2012" name="J. Biol. Chem.">
        <title>Modulation of the Pyrococcus abyssi NucS endonuclease activity by the replication clamp PCNA at functional and structural levels.</title>
        <authorList>
            <person name="Creze C."/>
            <person name="Ligabue A."/>
            <person name="Laurent S."/>
            <person name="Lestini R."/>
            <person name="Laptenok S.P."/>
            <person name="Kuhn J."/>
            <person name="Vos M.H."/>
            <person name="Czjzek M."/>
            <person name="Myllykallio H."/>
            <person name="Flament D."/>
        </authorList>
    </citation>
    <scope>FUNCTION</scope>
    <scope>SUBUNIT</scope>
    <scope>INTERACTION WITH NUCS</scope>
</reference>
<keyword id="KW-0002">3D-structure</keyword>
<keyword id="KW-0235">DNA replication</keyword>
<keyword id="KW-0238">DNA-binding</keyword>
<sequence length="249" mass="28035">MPFEIVFEGAKEFAQLIETASRLIDEAAFKVTEEGISMRAMDPSRVVLIDLNLPASIFSKYEVDGEETIGVNMDHLKKVLKRGKAKETLILRKGEENFLEISLQGTATRTFKLPLIDVEEIEVDLPELPFTAKVVILGDVIKEAVKDASLVSDSMKFIAKENEFTMRAEGETQEVEVKLTLEDEGLLDIEVQEETKSAYGISYLSDMVKGLGKADEVTIKFGNEMPMQMEYYIRDEGRLIFLLAPRVEE</sequence>